<evidence type="ECO:0000255" key="1">
    <source>
        <dbReference type="HAMAP-Rule" id="MF_01547"/>
    </source>
</evidence>
<sequence>MARSKSSEKWLKEHFKDPFVQRAMKEGYRSRASYKLLEIQQKDHLIRPGMRVLDVGAAPGGWTQVAAPLIGRKGRLVAVDRLAMDPVADATVICGDVYDDAILAACQEALPGGADLIMSDMAPNMSGIASVDQARAIDLAELALDMAHRWLVPGGALLIKVFMGSGAEELRRALRRDFKKIVVRKPEASRARSTEQYWLALDFQGVAQERLDNGGASSL</sequence>
<proteinExistence type="inferred from homology"/>
<reference key="1">
    <citation type="journal article" date="2008" name="BMC Genomics">
        <title>Acidithiobacillus ferrooxidans metabolism: from genome sequence to industrial applications.</title>
        <authorList>
            <person name="Valdes J."/>
            <person name="Pedroso I."/>
            <person name="Quatrini R."/>
            <person name="Dodson R.J."/>
            <person name="Tettelin H."/>
            <person name="Blake R. II"/>
            <person name="Eisen J.A."/>
            <person name="Holmes D.S."/>
        </authorList>
    </citation>
    <scope>NUCLEOTIDE SEQUENCE [LARGE SCALE GENOMIC DNA]</scope>
    <source>
        <strain>ATCC 23270 / DSM 14882 / CIP 104768 / NCIMB 8455</strain>
    </source>
</reference>
<protein>
    <recommendedName>
        <fullName evidence="1">Ribosomal RNA large subunit methyltransferase E</fullName>
        <ecNumber evidence="1">2.1.1.166</ecNumber>
    </recommendedName>
    <alternativeName>
        <fullName evidence="1">23S rRNA Um2552 methyltransferase</fullName>
    </alternativeName>
    <alternativeName>
        <fullName evidence="1">rRNA (uridine-2'-O-)-methyltransferase</fullName>
    </alternativeName>
</protein>
<organism>
    <name type="scientific">Acidithiobacillus ferrooxidans (strain ATCC 23270 / DSM 14882 / CIP 104768 / NCIMB 8455)</name>
    <name type="common">Ferrobacillus ferrooxidans (strain ATCC 23270)</name>
    <dbReference type="NCBI Taxonomy" id="243159"/>
    <lineage>
        <taxon>Bacteria</taxon>
        <taxon>Pseudomonadati</taxon>
        <taxon>Pseudomonadota</taxon>
        <taxon>Acidithiobacillia</taxon>
        <taxon>Acidithiobacillales</taxon>
        <taxon>Acidithiobacillaceae</taxon>
        <taxon>Acidithiobacillus</taxon>
    </lineage>
</organism>
<dbReference type="EC" id="2.1.1.166" evidence="1"/>
<dbReference type="EMBL" id="CP001219">
    <property type="protein sequence ID" value="ACK78196.1"/>
    <property type="molecule type" value="Genomic_DNA"/>
</dbReference>
<dbReference type="RefSeq" id="WP_009561097.1">
    <property type="nucleotide sequence ID" value="NC_011761.1"/>
</dbReference>
<dbReference type="SMR" id="B7J8G6"/>
<dbReference type="STRING" id="243159.AFE_2736"/>
<dbReference type="PaxDb" id="243159-AFE_2736"/>
<dbReference type="GeneID" id="65281775"/>
<dbReference type="KEGG" id="afr:AFE_2736"/>
<dbReference type="eggNOG" id="COG0293">
    <property type="taxonomic scope" value="Bacteria"/>
</dbReference>
<dbReference type="HOGENOM" id="CLU_009422_4_0_6"/>
<dbReference type="Proteomes" id="UP000001362">
    <property type="component" value="Chromosome"/>
</dbReference>
<dbReference type="GO" id="GO:0005737">
    <property type="term" value="C:cytoplasm"/>
    <property type="evidence" value="ECO:0007669"/>
    <property type="project" value="UniProtKB-SubCell"/>
</dbReference>
<dbReference type="GO" id="GO:0008650">
    <property type="term" value="F:rRNA (uridine-2'-O-)-methyltransferase activity"/>
    <property type="evidence" value="ECO:0007669"/>
    <property type="project" value="UniProtKB-UniRule"/>
</dbReference>
<dbReference type="FunFam" id="3.40.50.150:FF:000005">
    <property type="entry name" value="Ribosomal RNA large subunit methyltransferase E"/>
    <property type="match status" value="1"/>
</dbReference>
<dbReference type="Gene3D" id="3.40.50.150">
    <property type="entry name" value="Vaccinia Virus protein VP39"/>
    <property type="match status" value="1"/>
</dbReference>
<dbReference type="HAMAP" id="MF_01547">
    <property type="entry name" value="RNA_methyltr_E"/>
    <property type="match status" value="1"/>
</dbReference>
<dbReference type="InterPro" id="IPR050082">
    <property type="entry name" value="RNA_methyltr_RlmE"/>
</dbReference>
<dbReference type="InterPro" id="IPR002877">
    <property type="entry name" value="RNA_MeTrfase_FtsJ_dom"/>
</dbReference>
<dbReference type="InterPro" id="IPR015507">
    <property type="entry name" value="rRNA-MeTfrase_E"/>
</dbReference>
<dbReference type="InterPro" id="IPR029063">
    <property type="entry name" value="SAM-dependent_MTases_sf"/>
</dbReference>
<dbReference type="PANTHER" id="PTHR10920">
    <property type="entry name" value="RIBOSOMAL RNA METHYLTRANSFERASE"/>
    <property type="match status" value="1"/>
</dbReference>
<dbReference type="PANTHER" id="PTHR10920:SF18">
    <property type="entry name" value="RRNA METHYLTRANSFERASE 2, MITOCHONDRIAL"/>
    <property type="match status" value="1"/>
</dbReference>
<dbReference type="Pfam" id="PF01728">
    <property type="entry name" value="FtsJ"/>
    <property type="match status" value="1"/>
</dbReference>
<dbReference type="PIRSF" id="PIRSF005461">
    <property type="entry name" value="23S_rRNA_mtase"/>
    <property type="match status" value="1"/>
</dbReference>
<dbReference type="SUPFAM" id="SSF53335">
    <property type="entry name" value="S-adenosyl-L-methionine-dependent methyltransferases"/>
    <property type="match status" value="1"/>
</dbReference>
<name>RLME_ACIF2</name>
<accession>B7J8G6</accession>
<gene>
    <name evidence="1" type="primary">rlmE</name>
    <name evidence="1" type="synonym">ftsJ</name>
    <name evidence="1" type="synonym">rrmJ</name>
    <name type="ordered locus">AFE_2736</name>
</gene>
<comment type="function">
    <text evidence="1">Specifically methylates the uridine in position 2552 of 23S rRNA at the 2'-O position of the ribose in the fully assembled 50S ribosomal subunit.</text>
</comment>
<comment type="catalytic activity">
    <reaction evidence="1">
        <text>uridine(2552) in 23S rRNA + S-adenosyl-L-methionine = 2'-O-methyluridine(2552) in 23S rRNA + S-adenosyl-L-homocysteine + H(+)</text>
        <dbReference type="Rhea" id="RHEA:42720"/>
        <dbReference type="Rhea" id="RHEA-COMP:10202"/>
        <dbReference type="Rhea" id="RHEA-COMP:10203"/>
        <dbReference type="ChEBI" id="CHEBI:15378"/>
        <dbReference type="ChEBI" id="CHEBI:57856"/>
        <dbReference type="ChEBI" id="CHEBI:59789"/>
        <dbReference type="ChEBI" id="CHEBI:65315"/>
        <dbReference type="ChEBI" id="CHEBI:74478"/>
        <dbReference type="EC" id="2.1.1.166"/>
    </reaction>
</comment>
<comment type="subcellular location">
    <subcellularLocation>
        <location evidence="1">Cytoplasm</location>
    </subcellularLocation>
</comment>
<comment type="similarity">
    <text evidence="1">Belongs to the class I-like SAM-binding methyltransferase superfamily. RNA methyltransferase RlmE family.</text>
</comment>
<keyword id="KW-0963">Cytoplasm</keyword>
<keyword id="KW-0489">Methyltransferase</keyword>
<keyword id="KW-1185">Reference proteome</keyword>
<keyword id="KW-0698">rRNA processing</keyword>
<keyword id="KW-0949">S-adenosyl-L-methionine</keyword>
<keyword id="KW-0808">Transferase</keyword>
<feature type="chain" id="PRO_1000194965" description="Ribosomal RNA large subunit methyltransferase E">
    <location>
        <begin position="1"/>
        <end position="219"/>
    </location>
</feature>
<feature type="active site" description="Proton acceptor" evidence="1">
    <location>
        <position position="160"/>
    </location>
</feature>
<feature type="binding site" evidence="1">
    <location>
        <position position="60"/>
    </location>
    <ligand>
        <name>S-adenosyl-L-methionine</name>
        <dbReference type="ChEBI" id="CHEBI:59789"/>
    </ligand>
</feature>
<feature type="binding site" evidence="1">
    <location>
        <position position="62"/>
    </location>
    <ligand>
        <name>S-adenosyl-L-methionine</name>
        <dbReference type="ChEBI" id="CHEBI:59789"/>
    </ligand>
</feature>
<feature type="binding site" evidence="1">
    <location>
        <position position="80"/>
    </location>
    <ligand>
        <name>S-adenosyl-L-methionine</name>
        <dbReference type="ChEBI" id="CHEBI:59789"/>
    </ligand>
</feature>
<feature type="binding site" evidence="1">
    <location>
        <position position="96"/>
    </location>
    <ligand>
        <name>S-adenosyl-L-methionine</name>
        <dbReference type="ChEBI" id="CHEBI:59789"/>
    </ligand>
</feature>
<feature type="binding site" evidence="1">
    <location>
        <position position="120"/>
    </location>
    <ligand>
        <name>S-adenosyl-L-methionine</name>
        <dbReference type="ChEBI" id="CHEBI:59789"/>
    </ligand>
</feature>